<keyword id="KW-0012">Acyltransferase</keyword>
<keyword id="KW-1185">Reference proteome</keyword>
<keyword id="KW-0808">Transferase</keyword>
<proteinExistence type="inferred from homology"/>
<dbReference type="EC" id="2.3.1.178"/>
<dbReference type="EMBL" id="AP006618">
    <property type="protein sequence ID" value="BAD57563.1"/>
    <property type="molecule type" value="Genomic_DNA"/>
</dbReference>
<dbReference type="RefSeq" id="WP_011209248.1">
    <property type="nucleotide sequence ID" value="NC_006361.1"/>
</dbReference>
<dbReference type="SMR" id="Q5YW78"/>
<dbReference type="STRING" id="247156.NFA_27160"/>
<dbReference type="GeneID" id="61133455"/>
<dbReference type="KEGG" id="nfa:NFA_27160"/>
<dbReference type="eggNOG" id="COG0456">
    <property type="taxonomic scope" value="Bacteria"/>
</dbReference>
<dbReference type="HOGENOM" id="CLU_111896_0_0_11"/>
<dbReference type="UniPathway" id="UPA00067">
    <property type="reaction ID" value="UER00122"/>
</dbReference>
<dbReference type="Proteomes" id="UP000006820">
    <property type="component" value="Chromosome"/>
</dbReference>
<dbReference type="GO" id="GO:0033816">
    <property type="term" value="F:diaminobutyrate acetyltransferase activity"/>
    <property type="evidence" value="ECO:0007669"/>
    <property type="project" value="UniProtKB-EC"/>
</dbReference>
<dbReference type="GO" id="GO:0019491">
    <property type="term" value="P:ectoine biosynthetic process"/>
    <property type="evidence" value="ECO:0007669"/>
    <property type="project" value="UniProtKB-UniPathway"/>
</dbReference>
<dbReference type="CDD" id="cd04301">
    <property type="entry name" value="NAT_SF"/>
    <property type="match status" value="1"/>
</dbReference>
<dbReference type="Gene3D" id="3.40.630.30">
    <property type="match status" value="1"/>
</dbReference>
<dbReference type="InterPro" id="IPR016181">
    <property type="entry name" value="Acyl_CoA_acyltransferase"/>
</dbReference>
<dbReference type="InterPro" id="IPR012772">
    <property type="entry name" value="Ectoine_EctA"/>
</dbReference>
<dbReference type="InterPro" id="IPR000182">
    <property type="entry name" value="GNAT_dom"/>
</dbReference>
<dbReference type="NCBIfam" id="TIGR02406">
    <property type="entry name" value="ectoine_EctA"/>
    <property type="match status" value="1"/>
</dbReference>
<dbReference type="PANTHER" id="PTHR43072:SF60">
    <property type="entry name" value="L-2,4-DIAMINOBUTYRIC ACID ACETYLTRANSFERASE"/>
    <property type="match status" value="1"/>
</dbReference>
<dbReference type="PANTHER" id="PTHR43072">
    <property type="entry name" value="N-ACETYLTRANSFERASE"/>
    <property type="match status" value="1"/>
</dbReference>
<dbReference type="Pfam" id="PF00583">
    <property type="entry name" value="Acetyltransf_1"/>
    <property type="match status" value="1"/>
</dbReference>
<dbReference type="SUPFAM" id="SSF55729">
    <property type="entry name" value="Acyl-CoA N-acyltransferases (Nat)"/>
    <property type="match status" value="1"/>
</dbReference>
<dbReference type="PROSITE" id="PS51186">
    <property type="entry name" value="GNAT"/>
    <property type="match status" value="1"/>
</dbReference>
<gene>
    <name type="primary">ectA</name>
    <name type="ordered locus">NFA_27160</name>
</gene>
<comment type="function">
    <text evidence="1">Catalyzes the acetylation of L-2,4-diaminobutyrate (DABA) to gamma-N-acetyl-alpha,gamma-diaminobutyric acid (ADABA) with acetyl coenzyme A.</text>
</comment>
<comment type="catalytic activity">
    <reaction>
        <text>L-2,4-diaminobutanoate + acetyl-CoA = (2S)-4-acetamido-2-aminobutanoate + CoA + H(+)</text>
        <dbReference type="Rhea" id="RHEA:16901"/>
        <dbReference type="ChEBI" id="CHEBI:15378"/>
        <dbReference type="ChEBI" id="CHEBI:57287"/>
        <dbReference type="ChEBI" id="CHEBI:57288"/>
        <dbReference type="ChEBI" id="CHEBI:58761"/>
        <dbReference type="ChEBI" id="CHEBI:58929"/>
        <dbReference type="EC" id="2.3.1.178"/>
    </reaction>
</comment>
<comment type="pathway">
    <text>Amine and polyamine biosynthesis; ectoine biosynthesis; L-ectoine from L-aspartate 4-semialdehyde: step 2/3.</text>
</comment>
<comment type="similarity">
    <text evidence="4">Belongs to the acetyltransferase family. EctA subfamily.</text>
</comment>
<sequence length="193" mass="21062">MSLQTLSTPTAEPVEEPRPVEAPWQVSDRIGTALLRAPQLGDAAEIWRIAKDSRVLDTNSSYAYLLWCRDFPGTTVVAEVDGRAVGFVIGYLRPESPDTVFVWQVAVSPTERGRGTGTALIQKLLDRVAPHGVTALETTISPDNPASIAMFAAVARRRGAQLTKQPLFDAGVFPDEHAPEDLYRIAPIAQEIR</sequence>
<evidence type="ECO:0000250" key="1"/>
<evidence type="ECO:0000255" key="2">
    <source>
        <dbReference type="PROSITE-ProRule" id="PRU00532"/>
    </source>
</evidence>
<evidence type="ECO:0000256" key="3">
    <source>
        <dbReference type="SAM" id="MobiDB-lite"/>
    </source>
</evidence>
<evidence type="ECO:0000305" key="4"/>
<reference key="1">
    <citation type="journal article" date="2004" name="Proc. Natl. Acad. Sci. U.S.A.">
        <title>The complete genomic sequence of Nocardia farcinica IFM 10152.</title>
        <authorList>
            <person name="Ishikawa J."/>
            <person name="Yamashita A."/>
            <person name="Mikami Y."/>
            <person name="Hoshino Y."/>
            <person name="Kurita H."/>
            <person name="Hotta K."/>
            <person name="Shiba T."/>
            <person name="Hattori M."/>
        </authorList>
    </citation>
    <scope>NUCLEOTIDE SEQUENCE [LARGE SCALE GENOMIC DNA]</scope>
    <source>
        <strain>IFM 10152</strain>
    </source>
</reference>
<feature type="chain" id="PRO_0000220088" description="L-2,4-diaminobutyric acid acetyltransferase">
    <location>
        <begin position="1"/>
        <end position="193"/>
    </location>
</feature>
<feature type="domain" description="N-acetyltransferase" evidence="2">
    <location>
        <begin position="33"/>
        <end position="185"/>
    </location>
</feature>
<feature type="region of interest" description="Disordered" evidence="3">
    <location>
        <begin position="1"/>
        <end position="22"/>
    </location>
</feature>
<protein>
    <recommendedName>
        <fullName>L-2,4-diaminobutyric acid acetyltransferase</fullName>
        <shortName>DABA acetyltransferase</shortName>
        <ecNumber>2.3.1.178</ecNumber>
    </recommendedName>
</protein>
<accession>Q5YW78</accession>
<organism>
    <name type="scientific">Nocardia farcinica (strain IFM 10152)</name>
    <dbReference type="NCBI Taxonomy" id="247156"/>
    <lineage>
        <taxon>Bacteria</taxon>
        <taxon>Bacillati</taxon>
        <taxon>Actinomycetota</taxon>
        <taxon>Actinomycetes</taxon>
        <taxon>Mycobacteriales</taxon>
        <taxon>Nocardiaceae</taxon>
        <taxon>Nocardia</taxon>
    </lineage>
</organism>
<name>ECTA_NOCFA</name>